<comment type="function">
    <text evidence="1">Catalyzes the reversible interconversion of serine and glycine with tetrahydrofolate (THF) serving as the one-carbon carrier. This reaction serves as the major source of one-carbon groups required for the biosynthesis of purines, thymidylate, methionine, and other important biomolecules. Also exhibits THF-independent aldolase activity toward beta-hydroxyamino acids, producing glycine and aldehydes, via a retro-aldol mechanism.</text>
</comment>
<comment type="catalytic activity">
    <reaction evidence="1">
        <text>(6R)-5,10-methylene-5,6,7,8-tetrahydrofolate + glycine + H2O = (6S)-5,6,7,8-tetrahydrofolate + L-serine</text>
        <dbReference type="Rhea" id="RHEA:15481"/>
        <dbReference type="ChEBI" id="CHEBI:15377"/>
        <dbReference type="ChEBI" id="CHEBI:15636"/>
        <dbReference type="ChEBI" id="CHEBI:33384"/>
        <dbReference type="ChEBI" id="CHEBI:57305"/>
        <dbReference type="ChEBI" id="CHEBI:57453"/>
        <dbReference type="EC" id="2.1.2.1"/>
    </reaction>
</comment>
<comment type="cofactor">
    <cofactor evidence="1">
        <name>pyridoxal 5'-phosphate</name>
        <dbReference type="ChEBI" id="CHEBI:597326"/>
    </cofactor>
</comment>
<comment type="pathway">
    <text evidence="1">One-carbon metabolism; tetrahydrofolate interconversion.</text>
</comment>
<comment type="pathway">
    <text evidence="1">Amino-acid biosynthesis; glycine biosynthesis; glycine from L-serine: step 1/1.</text>
</comment>
<comment type="subunit">
    <text evidence="1">Homodimer.</text>
</comment>
<comment type="subcellular location">
    <subcellularLocation>
        <location evidence="1">Cytoplasm</location>
    </subcellularLocation>
</comment>
<comment type="similarity">
    <text evidence="1">Belongs to the SHMT family.</text>
</comment>
<accession>Q32D21</accession>
<keyword id="KW-0007">Acetylation</keyword>
<keyword id="KW-0028">Amino-acid biosynthesis</keyword>
<keyword id="KW-0963">Cytoplasm</keyword>
<keyword id="KW-0554">One-carbon metabolism</keyword>
<keyword id="KW-0663">Pyridoxal phosphate</keyword>
<keyword id="KW-1185">Reference proteome</keyword>
<keyword id="KW-0808">Transferase</keyword>
<gene>
    <name evidence="1" type="primary">glyA</name>
    <name type="ordered locus">SDY_2741</name>
</gene>
<evidence type="ECO:0000255" key="1">
    <source>
        <dbReference type="HAMAP-Rule" id="MF_00051"/>
    </source>
</evidence>
<name>GLYA_SHIDS</name>
<protein>
    <recommendedName>
        <fullName evidence="1">Serine hydroxymethyltransferase</fullName>
        <shortName evidence="1">SHMT</shortName>
        <shortName evidence="1">Serine methylase</shortName>
        <ecNumber evidence="1">2.1.2.1</ecNumber>
    </recommendedName>
</protein>
<proteinExistence type="inferred from homology"/>
<feature type="chain" id="PRO_0000235022" description="Serine hydroxymethyltransferase">
    <location>
        <begin position="1"/>
        <end position="417"/>
    </location>
</feature>
<feature type="binding site" evidence="1">
    <location>
        <position position="121"/>
    </location>
    <ligand>
        <name>(6S)-5,6,7,8-tetrahydrofolate</name>
        <dbReference type="ChEBI" id="CHEBI:57453"/>
    </ligand>
</feature>
<feature type="binding site" evidence="1">
    <location>
        <begin position="125"/>
        <end position="127"/>
    </location>
    <ligand>
        <name>(6S)-5,6,7,8-tetrahydrofolate</name>
        <dbReference type="ChEBI" id="CHEBI:57453"/>
    </ligand>
</feature>
<feature type="binding site" evidence="1">
    <location>
        <begin position="355"/>
        <end position="357"/>
    </location>
    <ligand>
        <name>(6S)-5,6,7,8-tetrahydrofolate</name>
        <dbReference type="ChEBI" id="CHEBI:57453"/>
    </ligand>
</feature>
<feature type="site" description="Plays an important role in substrate specificity" evidence="1">
    <location>
        <position position="228"/>
    </location>
</feature>
<feature type="modified residue" description="N6-acetyllysine" evidence="1">
    <location>
        <position position="54"/>
    </location>
</feature>
<feature type="modified residue" description="N6-(pyridoxal phosphate)lysine" evidence="1">
    <location>
        <position position="229"/>
    </location>
</feature>
<feature type="modified residue" description="N6-acetyllysine" evidence="1">
    <location>
        <position position="250"/>
    </location>
</feature>
<feature type="modified residue" description="N6-acetyllysine" evidence="1">
    <location>
        <position position="285"/>
    </location>
</feature>
<feature type="modified residue" description="N6-acetyllysine" evidence="1">
    <location>
        <position position="354"/>
    </location>
</feature>
<feature type="modified residue" description="N6-acetyllysine" evidence="1">
    <location>
        <position position="375"/>
    </location>
</feature>
<reference key="1">
    <citation type="journal article" date="2005" name="Nucleic Acids Res.">
        <title>Genome dynamics and diversity of Shigella species, the etiologic agents of bacillary dysentery.</title>
        <authorList>
            <person name="Yang F."/>
            <person name="Yang J."/>
            <person name="Zhang X."/>
            <person name="Chen L."/>
            <person name="Jiang Y."/>
            <person name="Yan Y."/>
            <person name="Tang X."/>
            <person name="Wang J."/>
            <person name="Xiong Z."/>
            <person name="Dong J."/>
            <person name="Xue Y."/>
            <person name="Zhu Y."/>
            <person name="Xu X."/>
            <person name="Sun L."/>
            <person name="Chen S."/>
            <person name="Nie H."/>
            <person name="Peng J."/>
            <person name="Xu J."/>
            <person name="Wang Y."/>
            <person name="Yuan Z."/>
            <person name="Wen Y."/>
            <person name="Yao Z."/>
            <person name="Shen Y."/>
            <person name="Qiang B."/>
            <person name="Hou Y."/>
            <person name="Yu J."/>
            <person name="Jin Q."/>
        </authorList>
    </citation>
    <scope>NUCLEOTIDE SEQUENCE [LARGE SCALE GENOMIC DNA]</scope>
    <source>
        <strain>Sd197</strain>
    </source>
</reference>
<dbReference type="EC" id="2.1.2.1" evidence="1"/>
<dbReference type="EMBL" id="CP000034">
    <property type="protein sequence ID" value="ABB62784.1"/>
    <property type="molecule type" value="Genomic_DNA"/>
</dbReference>
<dbReference type="RefSeq" id="WP_000919174.1">
    <property type="nucleotide sequence ID" value="NC_007606.1"/>
</dbReference>
<dbReference type="RefSeq" id="YP_404275.1">
    <property type="nucleotide sequence ID" value="NC_007606.1"/>
</dbReference>
<dbReference type="SMR" id="Q32D21"/>
<dbReference type="STRING" id="300267.SDY_2741"/>
<dbReference type="EnsemblBacteria" id="ABB62784">
    <property type="protein sequence ID" value="ABB62784"/>
    <property type="gene ID" value="SDY_2741"/>
</dbReference>
<dbReference type="KEGG" id="sdy:SDY_2741"/>
<dbReference type="PATRIC" id="fig|300267.13.peg.3305"/>
<dbReference type="HOGENOM" id="CLU_022477_2_1_6"/>
<dbReference type="UniPathway" id="UPA00193"/>
<dbReference type="UniPathway" id="UPA00288">
    <property type="reaction ID" value="UER01023"/>
</dbReference>
<dbReference type="Proteomes" id="UP000002716">
    <property type="component" value="Chromosome"/>
</dbReference>
<dbReference type="GO" id="GO:0005829">
    <property type="term" value="C:cytosol"/>
    <property type="evidence" value="ECO:0007669"/>
    <property type="project" value="TreeGrafter"/>
</dbReference>
<dbReference type="GO" id="GO:0004372">
    <property type="term" value="F:glycine hydroxymethyltransferase activity"/>
    <property type="evidence" value="ECO:0007669"/>
    <property type="project" value="UniProtKB-UniRule"/>
</dbReference>
<dbReference type="GO" id="GO:0030170">
    <property type="term" value="F:pyridoxal phosphate binding"/>
    <property type="evidence" value="ECO:0007669"/>
    <property type="project" value="UniProtKB-UniRule"/>
</dbReference>
<dbReference type="GO" id="GO:0019264">
    <property type="term" value="P:glycine biosynthetic process from serine"/>
    <property type="evidence" value="ECO:0007669"/>
    <property type="project" value="UniProtKB-UniRule"/>
</dbReference>
<dbReference type="GO" id="GO:0035999">
    <property type="term" value="P:tetrahydrofolate interconversion"/>
    <property type="evidence" value="ECO:0007669"/>
    <property type="project" value="UniProtKB-UniRule"/>
</dbReference>
<dbReference type="CDD" id="cd00378">
    <property type="entry name" value="SHMT"/>
    <property type="match status" value="1"/>
</dbReference>
<dbReference type="FunFam" id="3.40.640.10:FF:000001">
    <property type="entry name" value="Serine hydroxymethyltransferase"/>
    <property type="match status" value="1"/>
</dbReference>
<dbReference type="FunFam" id="3.90.1150.10:FF:000003">
    <property type="entry name" value="Serine hydroxymethyltransferase"/>
    <property type="match status" value="1"/>
</dbReference>
<dbReference type="Gene3D" id="3.90.1150.10">
    <property type="entry name" value="Aspartate Aminotransferase, domain 1"/>
    <property type="match status" value="1"/>
</dbReference>
<dbReference type="Gene3D" id="3.40.640.10">
    <property type="entry name" value="Type I PLP-dependent aspartate aminotransferase-like (Major domain)"/>
    <property type="match status" value="1"/>
</dbReference>
<dbReference type="HAMAP" id="MF_00051">
    <property type="entry name" value="SHMT"/>
    <property type="match status" value="1"/>
</dbReference>
<dbReference type="InterPro" id="IPR015424">
    <property type="entry name" value="PyrdxlP-dep_Trfase"/>
</dbReference>
<dbReference type="InterPro" id="IPR015421">
    <property type="entry name" value="PyrdxlP-dep_Trfase_major"/>
</dbReference>
<dbReference type="InterPro" id="IPR015422">
    <property type="entry name" value="PyrdxlP-dep_Trfase_small"/>
</dbReference>
<dbReference type="InterPro" id="IPR001085">
    <property type="entry name" value="Ser_HO-MeTrfase"/>
</dbReference>
<dbReference type="InterPro" id="IPR049943">
    <property type="entry name" value="Ser_HO-MeTrfase-like"/>
</dbReference>
<dbReference type="InterPro" id="IPR019798">
    <property type="entry name" value="Ser_HO-MeTrfase_PLP_BS"/>
</dbReference>
<dbReference type="InterPro" id="IPR039429">
    <property type="entry name" value="SHMT-like_dom"/>
</dbReference>
<dbReference type="NCBIfam" id="NF000586">
    <property type="entry name" value="PRK00011.1"/>
    <property type="match status" value="1"/>
</dbReference>
<dbReference type="PANTHER" id="PTHR11680">
    <property type="entry name" value="SERINE HYDROXYMETHYLTRANSFERASE"/>
    <property type="match status" value="1"/>
</dbReference>
<dbReference type="PANTHER" id="PTHR11680:SF50">
    <property type="entry name" value="SERINE HYDROXYMETHYLTRANSFERASE"/>
    <property type="match status" value="1"/>
</dbReference>
<dbReference type="Pfam" id="PF00464">
    <property type="entry name" value="SHMT"/>
    <property type="match status" value="1"/>
</dbReference>
<dbReference type="PIRSF" id="PIRSF000412">
    <property type="entry name" value="SHMT"/>
    <property type="match status" value="1"/>
</dbReference>
<dbReference type="SUPFAM" id="SSF53383">
    <property type="entry name" value="PLP-dependent transferases"/>
    <property type="match status" value="1"/>
</dbReference>
<dbReference type="PROSITE" id="PS00096">
    <property type="entry name" value="SHMT"/>
    <property type="match status" value="1"/>
</dbReference>
<organism>
    <name type="scientific">Shigella dysenteriae serotype 1 (strain Sd197)</name>
    <dbReference type="NCBI Taxonomy" id="300267"/>
    <lineage>
        <taxon>Bacteria</taxon>
        <taxon>Pseudomonadati</taxon>
        <taxon>Pseudomonadota</taxon>
        <taxon>Gammaproteobacteria</taxon>
        <taxon>Enterobacterales</taxon>
        <taxon>Enterobacteriaceae</taxon>
        <taxon>Shigella</taxon>
    </lineage>
</organism>
<sequence>MLKREMNIADYDAELWQAMEQEKVRQEEHIELIASENYTSPRVMQAQGSQLTNKYAEGYPGKRYYGGCEYVDIVEQLAIDRAKELFGADYANVQPHSGSQANFTVYTALLEPGDTVLGMNLAHGGHLTHGSPVNFSGKLYNIVPYGIDATGHIDYADLEKQAKEHKPKMIIGGFSAYSGVVDWAKMREIADSIGAYLFVDMAHVAGLVAAGVYPNPVPHAHVVTTTTHKTLAGPRGGLILAKGGSEELYKKLNSAVFPGGQGGPLMHVIAGKAVALKEAMEPEFKTYQQQVAKNAKAMVEVFLERGYKVVSGGTDNHLFLVDLVDKNLTGKEADAALGRANITVNKNSVPNDPKSPFVTSGIRVGTPAITRRGFKEAEAKELAGWMCDVLDSINDEAVIERIKGKVLDICARYPVYA</sequence>